<reference key="1">
    <citation type="journal article" date="2000" name="Nature">
        <title>Sequence and analysis of chromosome 3 of the plant Arabidopsis thaliana.</title>
        <authorList>
            <person name="Salanoubat M."/>
            <person name="Lemcke K."/>
            <person name="Rieger M."/>
            <person name="Ansorge W."/>
            <person name="Unseld M."/>
            <person name="Fartmann B."/>
            <person name="Valle G."/>
            <person name="Bloecker H."/>
            <person name="Perez-Alonso M."/>
            <person name="Obermaier B."/>
            <person name="Delseny M."/>
            <person name="Boutry M."/>
            <person name="Grivell L.A."/>
            <person name="Mache R."/>
            <person name="Puigdomenech P."/>
            <person name="De Simone V."/>
            <person name="Choisne N."/>
            <person name="Artiguenave F."/>
            <person name="Robert C."/>
            <person name="Brottier P."/>
            <person name="Wincker P."/>
            <person name="Cattolico L."/>
            <person name="Weissenbach J."/>
            <person name="Saurin W."/>
            <person name="Quetier F."/>
            <person name="Schaefer M."/>
            <person name="Mueller-Auer S."/>
            <person name="Gabel C."/>
            <person name="Fuchs M."/>
            <person name="Benes V."/>
            <person name="Wurmbach E."/>
            <person name="Drzonek H."/>
            <person name="Erfle H."/>
            <person name="Jordan N."/>
            <person name="Bangert S."/>
            <person name="Wiedelmann R."/>
            <person name="Kranz H."/>
            <person name="Voss H."/>
            <person name="Holland R."/>
            <person name="Brandt P."/>
            <person name="Nyakatura G."/>
            <person name="Vezzi A."/>
            <person name="D'Angelo M."/>
            <person name="Pallavicini A."/>
            <person name="Toppo S."/>
            <person name="Simionati B."/>
            <person name="Conrad A."/>
            <person name="Hornischer K."/>
            <person name="Kauer G."/>
            <person name="Loehnert T.-H."/>
            <person name="Nordsiek G."/>
            <person name="Reichelt J."/>
            <person name="Scharfe M."/>
            <person name="Schoen O."/>
            <person name="Bargues M."/>
            <person name="Terol J."/>
            <person name="Climent J."/>
            <person name="Navarro P."/>
            <person name="Collado C."/>
            <person name="Perez-Perez A."/>
            <person name="Ottenwaelder B."/>
            <person name="Duchemin D."/>
            <person name="Cooke R."/>
            <person name="Laudie M."/>
            <person name="Berger-Llauro C."/>
            <person name="Purnelle B."/>
            <person name="Masuy D."/>
            <person name="de Haan M."/>
            <person name="Maarse A.C."/>
            <person name="Alcaraz J.-P."/>
            <person name="Cottet A."/>
            <person name="Casacuberta E."/>
            <person name="Monfort A."/>
            <person name="Argiriou A."/>
            <person name="Flores M."/>
            <person name="Liguori R."/>
            <person name="Vitale D."/>
            <person name="Mannhaupt G."/>
            <person name="Haase D."/>
            <person name="Schoof H."/>
            <person name="Rudd S."/>
            <person name="Zaccaria P."/>
            <person name="Mewes H.-W."/>
            <person name="Mayer K.F.X."/>
            <person name="Kaul S."/>
            <person name="Town C.D."/>
            <person name="Koo H.L."/>
            <person name="Tallon L.J."/>
            <person name="Jenkins J."/>
            <person name="Rooney T."/>
            <person name="Rizzo M."/>
            <person name="Walts A."/>
            <person name="Utterback T."/>
            <person name="Fujii C.Y."/>
            <person name="Shea T.P."/>
            <person name="Creasy T.H."/>
            <person name="Haas B."/>
            <person name="Maiti R."/>
            <person name="Wu D."/>
            <person name="Peterson J."/>
            <person name="Van Aken S."/>
            <person name="Pai G."/>
            <person name="Militscher J."/>
            <person name="Sellers P."/>
            <person name="Gill J.E."/>
            <person name="Feldblyum T.V."/>
            <person name="Preuss D."/>
            <person name="Lin X."/>
            <person name="Nierman W.C."/>
            <person name="Salzberg S.L."/>
            <person name="White O."/>
            <person name="Venter J.C."/>
            <person name="Fraser C.M."/>
            <person name="Kaneko T."/>
            <person name="Nakamura Y."/>
            <person name="Sato S."/>
            <person name="Kato T."/>
            <person name="Asamizu E."/>
            <person name="Sasamoto S."/>
            <person name="Kimura T."/>
            <person name="Idesawa K."/>
            <person name="Kawashima K."/>
            <person name="Kishida Y."/>
            <person name="Kiyokawa C."/>
            <person name="Kohara M."/>
            <person name="Matsumoto M."/>
            <person name="Matsuno A."/>
            <person name="Muraki A."/>
            <person name="Nakayama S."/>
            <person name="Nakazaki N."/>
            <person name="Shinpo S."/>
            <person name="Takeuchi C."/>
            <person name="Wada T."/>
            <person name="Watanabe A."/>
            <person name="Yamada M."/>
            <person name="Yasuda M."/>
            <person name="Tabata S."/>
        </authorList>
    </citation>
    <scope>NUCLEOTIDE SEQUENCE [LARGE SCALE GENOMIC DNA]</scope>
    <source>
        <strain>cv. Columbia</strain>
    </source>
</reference>
<reference key="2">
    <citation type="journal article" date="2017" name="Plant J.">
        <title>Araport11: a complete reannotation of the Arabidopsis thaliana reference genome.</title>
        <authorList>
            <person name="Cheng C.Y."/>
            <person name="Krishnakumar V."/>
            <person name="Chan A.P."/>
            <person name="Thibaud-Nissen F."/>
            <person name="Schobel S."/>
            <person name="Town C.D."/>
        </authorList>
    </citation>
    <scope>GENOME REANNOTATION</scope>
    <source>
        <strain>cv. Columbia</strain>
    </source>
</reference>
<reference key="3">
    <citation type="journal article" date="2003" name="Science">
        <title>Empirical analysis of transcriptional activity in the Arabidopsis genome.</title>
        <authorList>
            <person name="Yamada K."/>
            <person name="Lim J."/>
            <person name="Dale J.M."/>
            <person name="Chen H."/>
            <person name="Shinn P."/>
            <person name="Palm C.J."/>
            <person name="Southwick A.M."/>
            <person name="Wu H.C."/>
            <person name="Kim C.J."/>
            <person name="Nguyen M."/>
            <person name="Pham P.K."/>
            <person name="Cheuk R.F."/>
            <person name="Karlin-Newmann G."/>
            <person name="Liu S.X."/>
            <person name="Lam B."/>
            <person name="Sakano H."/>
            <person name="Wu T."/>
            <person name="Yu G."/>
            <person name="Miranda M."/>
            <person name="Quach H.L."/>
            <person name="Tripp M."/>
            <person name="Chang C.H."/>
            <person name="Lee J.M."/>
            <person name="Toriumi M.J."/>
            <person name="Chan M.M."/>
            <person name="Tang C.C."/>
            <person name="Onodera C.S."/>
            <person name="Deng J.M."/>
            <person name="Akiyama K."/>
            <person name="Ansari Y."/>
            <person name="Arakawa T."/>
            <person name="Banh J."/>
            <person name="Banno F."/>
            <person name="Bowser L."/>
            <person name="Brooks S.Y."/>
            <person name="Carninci P."/>
            <person name="Chao Q."/>
            <person name="Choy N."/>
            <person name="Enju A."/>
            <person name="Goldsmith A.D."/>
            <person name="Gurjal M."/>
            <person name="Hansen N.F."/>
            <person name="Hayashizaki Y."/>
            <person name="Johnson-Hopson C."/>
            <person name="Hsuan V.W."/>
            <person name="Iida K."/>
            <person name="Karnes M."/>
            <person name="Khan S."/>
            <person name="Koesema E."/>
            <person name="Ishida J."/>
            <person name="Jiang P.X."/>
            <person name="Jones T."/>
            <person name="Kawai J."/>
            <person name="Kamiya A."/>
            <person name="Meyers C."/>
            <person name="Nakajima M."/>
            <person name="Narusaka M."/>
            <person name="Seki M."/>
            <person name="Sakurai T."/>
            <person name="Satou M."/>
            <person name="Tamse R."/>
            <person name="Vaysberg M."/>
            <person name="Wallender E.K."/>
            <person name="Wong C."/>
            <person name="Yamamura Y."/>
            <person name="Yuan S."/>
            <person name="Shinozaki K."/>
            <person name="Davis R.W."/>
            <person name="Theologis A."/>
            <person name="Ecker J.R."/>
        </authorList>
    </citation>
    <scope>NUCLEOTIDE SEQUENCE [LARGE SCALE MRNA]</scope>
    <source>
        <strain>cv. Columbia</strain>
    </source>
</reference>
<reference key="4">
    <citation type="submission" date="2005-02" db="EMBL/GenBank/DDBJ databases">
        <title>Arabidopsis ORF clones.</title>
        <authorList>
            <person name="Cheuk R.F."/>
            <person name="Chen H."/>
            <person name="Kim C.J."/>
            <person name="Shinn P."/>
            <person name="Ecker J.R."/>
        </authorList>
    </citation>
    <scope>NUCLEOTIDE SEQUENCE [LARGE SCALE MRNA]</scope>
    <source>
        <strain>cv. Columbia</strain>
    </source>
</reference>
<reference key="5">
    <citation type="journal article" date="2007" name="Plant Physiol.">
        <title>Glucan, water dikinase activity stimulates breakdown of starch granules by plastidial beta-amylases.</title>
        <authorList>
            <person name="Edner C."/>
            <person name="Li J."/>
            <person name="Albrecht T."/>
            <person name="Mahlow S."/>
            <person name="Hejazi M."/>
            <person name="Hussain H."/>
            <person name="Kaplan F."/>
            <person name="Guy C."/>
            <person name="Smith S.M."/>
            <person name="Steup M."/>
            <person name="Ritte G."/>
        </authorList>
    </citation>
    <scope>SUBCELLULAR LOCATION</scope>
</reference>
<reference key="6">
    <citation type="journal article" date="2016" name="Plant Cell">
        <title>The starch granule-associated protein EARLY STARVATION1 is required for the control of starch degradation in Arabidopsis thaliana leaves.</title>
        <authorList>
            <person name="Feike D."/>
            <person name="Seung D."/>
            <person name="Graf A."/>
            <person name="Bischof S."/>
            <person name="Ellick T."/>
            <person name="Coiro M."/>
            <person name="Soyk S."/>
            <person name="Eicke S."/>
            <person name="Mettler-Altmann T."/>
            <person name="Lu K.J."/>
            <person name="Trick M."/>
            <person name="Zeeman S.C."/>
            <person name="Smith A.M."/>
        </authorList>
    </citation>
    <scope>FUNCTION</scope>
    <scope>DISRUPTION PHENOTYPE</scope>
    <scope>SUBCELLULAR LOCATION</scope>
    <scope>TISSUE SPECIFICITY</scope>
    <scope>INDUCTION</scope>
    <source>
        <strain>cv. Columbia</strain>
        <strain>cv. Landsberg erecta</strain>
    </source>
</reference>
<reference key="7">
    <citation type="journal article" date="2021" name="Front. Plant Sci.">
        <title>EARLY STARVATION 1 is a functionally conserved protein promoting gravitropic responses in plants by forming starch granules.</title>
        <authorList>
            <person name="Song K."/>
            <person name="Lee D.-W."/>
            <person name="Kim J."/>
            <person name="Kim J."/>
            <person name="Guim H."/>
            <person name="Kim K."/>
            <person name="Jeon J.-S."/>
            <person name="Choi G."/>
        </authorList>
    </citation>
    <scope>DISRUPTION PHENOTYPE</scope>
    <source>
        <strain>cv. Columbia</strain>
    </source>
</reference>
<reference key="8">
    <citation type="journal article" date="2022" name="Plant J.">
        <title>LIKE EARLY STARVATION 1 alters the glucan structures at the starch granule surface and thereby influences the action of both starch-synthesizing and starch-degrading enzymes.</title>
        <authorList>
            <person name="Singh A."/>
            <person name="Compart J."/>
            <person name="Al-Rawi S.A."/>
            <person name="Mahto H."/>
            <person name="Ahmad A.M."/>
            <person name="Fettke J."/>
        </authorList>
    </citation>
    <scope>FUNCTION</scope>
    <source>
        <strain>cv. Columbia</strain>
    </source>
</reference>
<organism>
    <name type="scientific">Arabidopsis thaliana</name>
    <name type="common">Mouse-ear cress</name>
    <dbReference type="NCBI Taxonomy" id="3702"/>
    <lineage>
        <taxon>Eukaryota</taxon>
        <taxon>Viridiplantae</taxon>
        <taxon>Streptophyta</taxon>
        <taxon>Embryophyta</taxon>
        <taxon>Tracheophyta</taxon>
        <taxon>Spermatophyta</taxon>
        <taxon>Magnoliopsida</taxon>
        <taxon>eudicotyledons</taxon>
        <taxon>Gunneridae</taxon>
        <taxon>Pentapetalae</taxon>
        <taxon>rosids</taxon>
        <taxon>malvids</taxon>
        <taxon>Brassicales</taxon>
        <taxon>Brassicaceae</taxon>
        <taxon>Camelineae</taxon>
        <taxon>Arabidopsis</taxon>
    </lineage>
</organism>
<name>LESV_ARATH</name>
<sequence>MALRLGVSIGAALGSSHWDDGQRVRQRDFSASVNFTAPVTSRRSLRGSRTGVRILRVSNEGRESYLDMWKNAVDREKKEKAFEKIAENVVAVDGEKEKGGDLEKKSDEFQKILEVSVEERDRIQRMQVVDRAAAAISAARAILASNNSGDGKEGFPNEDNTVTSEVTETPKNAKLGMWSRTVYVPRSETSGTETPGPDFWSWTPPQGSEISSVDLQAVEKPAEFPTLPNPVLEKDKSADSLSIPYESMLSSERHSFTIPPFESLIEVRKEAETKPSSETLSTEHDLDLISSANAEEVARVLDSLDESSTHGVSEDGLKWWKQTGVEKRPDGVVCRWTMIRGVTADGVVEWQDKYWEASDDFGFKELGSEKSGRDATGNVWREFWRESMSQENGVVHMEKTADKWGKSGQGDEWQEKWWEHYDATGKSEKWAHKWCSIDRNTPLDAGHAHVWHERWGEKYDGQGGSTKYTDKWAERWVGDGWDKWGDKWDENFNPSAQGVKQGETWWEGKHGDRWNRSWGEGHNGSGWVHKYGKSSSGEHWDTHVPQETWYEKFPHFGFFHCFDNSVQLRAVKKPSDMS</sequence>
<dbReference type="EMBL" id="AL161667">
    <property type="protein sequence ID" value="CAB81601.1"/>
    <property type="status" value="ALT_SEQ"/>
    <property type="molecule type" value="Genomic_DNA"/>
</dbReference>
<dbReference type="EMBL" id="CP002686">
    <property type="protein sequence ID" value="AEE79431.1"/>
    <property type="molecule type" value="Genomic_DNA"/>
</dbReference>
<dbReference type="EMBL" id="CP002686">
    <property type="protein sequence ID" value="AEE79432.1"/>
    <property type="molecule type" value="Genomic_DNA"/>
</dbReference>
<dbReference type="EMBL" id="CP002686">
    <property type="protein sequence ID" value="AEE79433.1"/>
    <property type="molecule type" value="Genomic_DNA"/>
</dbReference>
<dbReference type="EMBL" id="AY140004">
    <property type="protein sequence ID" value="AAM98146.1"/>
    <property type="molecule type" value="mRNA"/>
</dbReference>
<dbReference type="EMBL" id="BT020590">
    <property type="protein sequence ID" value="AAW80863.1"/>
    <property type="molecule type" value="mRNA"/>
</dbReference>
<dbReference type="PIR" id="T47715">
    <property type="entry name" value="T47715"/>
</dbReference>
<dbReference type="RefSeq" id="NP_001190098.1">
    <property type="nucleotide sequence ID" value="NM_001203169.1"/>
</dbReference>
<dbReference type="RefSeq" id="NP_191135.1">
    <property type="nucleotide sequence ID" value="NM_115434.3"/>
</dbReference>
<dbReference type="RefSeq" id="NP_850708.1">
    <property type="nucleotide sequence ID" value="NM_180377.2"/>
</dbReference>
<dbReference type="SASBDB" id="Q5EAH9"/>
<dbReference type="SMR" id="Q5EAH9"/>
<dbReference type="FunCoup" id="Q5EAH9">
    <property type="interactions" value="575"/>
</dbReference>
<dbReference type="IntAct" id="Q5EAH9">
    <property type="interactions" value="3"/>
</dbReference>
<dbReference type="STRING" id="3702.Q5EAH9"/>
<dbReference type="PaxDb" id="3702-AT3G55760.2"/>
<dbReference type="PRIDE" id="Q9M048"/>
<dbReference type="ProteomicsDB" id="183736"/>
<dbReference type="EnsemblPlants" id="AT3G55760.1">
    <property type="protein sequence ID" value="AT3G55760.1"/>
    <property type="gene ID" value="AT3G55760"/>
</dbReference>
<dbReference type="EnsemblPlants" id="AT3G55760.2">
    <property type="protein sequence ID" value="AT3G55760.2"/>
    <property type="gene ID" value="AT3G55760"/>
</dbReference>
<dbReference type="EnsemblPlants" id="AT3G55760.3">
    <property type="protein sequence ID" value="AT3G55760.3"/>
    <property type="gene ID" value="AT3G55760"/>
</dbReference>
<dbReference type="GeneID" id="824742"/>
<dbReference type="Gramene" id="AT3G55760.1">
    <property type="protein sequence ID" value="AT3G55760.1"/>
    <property type="gene ID" value="AT3G55760"/>
</dbReference>
<dbReference type="Gramene" id="AT3G55760.2">
    <property type="protein sequence ID" value="AT3G55760.2"/>
    <property type="gene ID" value="AT3G55760"/>
</dbReference>
<dbReference type="Gramene" id="AT3G55760.3">
    <property type="protein sequence ID" value="AT3G55760.3"/>
    <property type="gene ID" value="AT3G55760"/>
</dbReference>
<dbReference type="KEGG" id="ath:AT3G55760"/>
<dbReference type="Araport" id="AT3G55760"/>
<dbReference type="TAIR" id="AT3G55760">
    <property type="gene designation" value="LESV"/>
</dbReference>
<dbReference type="eggNOG" id="ENOG502QSD3">
    <property type="taxonomic scope" value="Eukaryota"/>
</dbReference>
<dbReference type="HOGENOM" id="CLU_035092_0_0_1"/>
<dbReference type="InParanoid" id="Q5EAH9"/>
<dbReference type="OMA" id="FWSWAPP"/>
<dbReference type="PRO" id="PR:Q5EAH9"/>
<dbReference type="Proteomes" id="UP000006548">
    <property type="component" value="Chromosome 3"/>
</dbReference>
<dbReference type="ExpressionAtlas" id="Q5EAH9">
    <property type="expression patterns" value="baseline and differential"/>
</dbReference>
<dbReference type="GO" id="GO:0009507">
    <property type="term" value="C:chloroplast"/>
    <property type="evidence" value="ECO:0007005"/>
    <property type="project" value="TAIR"/>
</dbReference>
<dbReference type="GO" id="GO:0009570">
    <property type="term" value="C:chloroplast stroma"/>
    <property type="evidence" value="ECO:0000314"/>
    <property type="project" value="TAIR"/>
</dbReference>
<dbReference type="GO" id="GO:0005829">
    <property type="term" value="C:cytosol"/>
    <property type="evidence" value="ECO:0007005"/>
    <property type="project" value="TAIR"/>
</dbReference>
<dbReference type="GO" id="GO:0043036">
    <property type="term" value="C:starch grain"/>
    <property type="evidence" value="ECO:0000314"/>
    <property type="project" value="UniProtKB"/>
</dbReference>
<dbReference type="GO" id="GO:2001070">
    <property type="term" value="F:starch binding"/>
    <property type="evidence" value="ECO:0000314"/>
    <property type="project" value="UniProtKB"/>
</dbReference>
<dbReference type="GO" id="GO:2000904">
    <property type="term" value="P:regulation of starch metabolic process"/>
    <property type="evidence" value="ECO:0000314"/>
    <property type="project" value="UniProtKB"/>
</dbReference>
<dbReference type="GO" id="GO:0005982">
    <property type="term" value="P:starch metabolic process"/>
    <property type="evidence" value="ECO:0000315"/>
    <property type="project" value="TAIR"/>
</dbReference>
<dbReference type="InterPro" id="IPR052495">
    <property type="entry name" value="Alpha-glucan_binding_chloro"/>
</dbReference>
<dbReference type="PANTHER" id="PTHR34113">
    <property type="entry name" value="INACTIVE PURPLE ACID PHOSPHATASE-LIKE PROTEIN"/>
    <property type="match status" value="1"/>
</dbReference>
<dbReference type="PANTHER" id="PTHR34113:SF2">
    <property type="entry name" value="PROTEIN LIKE EARLY STARVATION, CHLOROPLASTIC"/>
    <property type="match status" value="1"/>
</dbReference>
<gene>
    <name evidence="7" type="primary">LESV</name>
    <name evidence="9" type="ordered locus">At3g55760</name>
    <name evidence="10" type="ORF">F1I16.170</name>
</gene>
<feature type="transit peptide" description="Chloroplast" evidence="1">
    <location>
        <begin position="1"/>
        <end position="56"/>
    </location>
</feature>
<feature type="chain" id="PRO_0000457400" description="Protein LIKE EARLY STARVATION, chloroplastic">
    <location>
        <begin position="57"/>
        <end position="578"/>
    </location>
</feature>
<feature type="region of interest" description="Disordered" evidence="2">
    <location>
        <begin position="146"/>
        <end position="166"/>
    </location>
</feature>
<feature type="region of interest" description="Disordered" evidence="2">
    <location>
        <begin position="187"/>
        <end position="206"/>
    </location>
</feature>
<feature type="sequence conflict" description="In Ref. 3; AAM98146." evidence="8" ref="3">
    <original>F</original>
    <variation>S</variation>
    <location>
        <position position="361"/>
    </location>
</feature>
<comment type="function">
    <text evidence="4 6">Binds preferentially to highly ordered alpha-glucans, such as starch and crystalline maltodextrins (PubMed:35665549). Involved in the organization of the starch granule matrix, thus influencing starch turnover by modulating the accessibility of starch polymers to modifying and degrading enzymes involved in phosphorylation, hydrolyzes and synthesis, including starch synthases (SSI and SSIII), starch phosphorylases (PHS1), isoamylase, beta-amylase, glucan water dikinase (GWD) and phosphoglucan water dikinase (PWD) (PubMed:27207856, PubMed:35665549).</text>
</comment>
<comment type="subcellular location">
    <subcellularLocation>
        <location evidence="3 4">Plastid</location>
        <location evidence="3 4">Chloroplast stroma</location>
    </subcellularLocation>
    <text evidence="3 4">Binds to starch granules in chloroplasts.</text>
</comment>
<comment type="tissue specificity">
    <text evidence="4">Expressed ubiquitously.</text>
</comment>
<comment type="induction">
    <text evidence="4">Accumulates at the end of the night, but fades out during the day.</text>
</comment>
<comment type="disruption phenotype">
    <text evidence="4 5">No visible effect on starch and sugars turnover (PubMed:27207856, PubMed:34367195). In the double mutant esv1-2 lesv-1, starch is more rapidely degraded during the night (PubMed:27207856).</text>
</comment>
<comment type="similarity">
    <text evidence="8">Belongs to the ESV1 family.</text>
</comment>
<comment type="sequence caution" evidence="8">
    <conflict type="erroneous gene model prediction">
        <sequence resource="EMBL-CDS" id="CAB81601"/>
    </conflict>
</comment>
<keyword id="KW-0150">Chloroplast</keyword>
<keyword id="KW-0934">Plastid</keyword>
<keyword id="KW-1185">Reference proteome</keyword>
<keyword id="KW-0809">Transit peptide</keyword>
<accession>Q5EAH9</accession>
<accession>A0A178VES7</accession>
<accession>Q8L722</accession>
<accession>Q9M048</accession>
<proteinExistence type="evidence at transcript level"/>
<evidence type="ECO:0000255" key="1"/>
<evidence type="ECO:0000256" key="2">
    <source>
        <dbReference type="SAM" id="MobiDB-lite"/>
    </source>
</evidence>
<evidence type="ECO:0000269" key="3">
    <source>
    </source>
</evidence>
<evidence type="ECO:0000269" key="4">
    <source>
    </source>
</evidence>
<evidence type="ECO:0000269" key="5">
    <source>
    </source>
</evidence>
<evidence type="ECO:0000269" key="6">
    <source>
    </source>
</evidence>
<evidence type="ECO:0000303" key="7">
    <source>
    </source>
</evidence>
<evidence type="ECO:0000305" key="8"/>
<evidence type="ECO:0000312" key="9">
    <source>
        <dbReference type="Araport" id="AT3G55760"/>
    </source>
</evidence>
<evidence type="ECO:0000312" key="10">
    <source>
        <dbReference type="EMBL" id="CAB81601.1"/>
    </source>
</evidence>
<protein>
    <recommendedName>
        <fullName evidence="7">Protein LIKE EARLY STARVATION, chloroplastic</fullName>
    </recommendedName>
</protein>